<feature type="chain" id="PRO_0000244599" description="26S proteasome non-ATPase regulatory subunit 8">
    <location>
        <begin position="1"/>
        <end position="287"/>
    </location>
</feature>
<feature type="domain" description="PCI" evidence="3">
    <location>
        <begin position="99"/>
        <end position="268"/>
    </location>
</feature>
<feature type="modified residue" description="Phosphoserine" evidence="1">
    <location>
        <position position="43"/>
    </location>
</feature>
<feature type="cross-link" description="Glycyl lysine isopeptide (Lys-Gly) (interchain with G-Cter in SUMO2)" evidence="1">
    <location>
        <position position="234"/>
    </location>
</feature>
<evidence type="ECO:0000250" key="1">
    <source>
        <dbReference type="UniProtKB" id="P48556"/>
    </source>
</evidence>
<evidence type="ECO:0000250" key="2">
    <source>
        <dbReference type="UniProtKB" id="Q9CX56"/>
    </source>
</evidence>
<evidence type="ECO:0000255" key="3">
    <source>
        <dbReference type="PROSITE-ProRule" id="PRU01185"/>
    </source>
</evidence>
<evidence type="ECO:0000305" key="4"/>
<dbReference type="EMBL" id="BC103400">
    <property type="protein sequence ID" value="AAI03401.1"/>
    <property type="molecule type" value="mRNA"/>
</dbReference>
<dbReference type="RefSeq" id="NP_001030283.1">
    <property type="nucleotide sequence ID" value="NM_001035111.2"/>
</dbReference>
<dbReference type="SMR" id="Q3SYT7"/>
<dbReference type="BioGRID" id="169521">
    <property type="interactions" value="1"/>
</dbReference>
<dbReference type="FunCoup" id="Q3SYT7">
    <property type="interactions" value="3914"/>
</dbReference>
<dbReference type="STRING" id="9913.ENSBTAP00000042312"/>
<dbReference type="PaxDb" id="9913-ENSBTAP00000042312"/>
<dbReference type="PeptideAtlas" id="Q3SYT7"/>
<dbReference type="GeneID" id="512891"/>
<dbReference type="KEGG" id="bta:512891"/>
<dbReference type="CTD" id="5714"/>
<dbReference type="eggNOG" id="KOG3151">
    <property type="taxonomic scope" value="Eukaryota"/>
</dbReference>
<dbReference type="InParanoid" id="Q3SYT7"/>
<dbReference type="OrthoDB" id="409122at2759"/>
<dbReference type="Proteomes" id="UP000009136">
    <property type="component" value="Unplaced"/>
</dbReference>
<dbReference type="GO" id="GO:0005829">
    <property type="term" value="C:cytosol"/>
    <property type="evidence" value="ECO:0000304"/>
    <property type="project" value="Reactome"/>
</dbReference>
<dbReference type="GO" id="GO:0005634">
    <property type="term" value="C:nucleus"/>
    <property type="evidence" value="ECO:0000318"/>
    <property type="project" value="GO_Central"/>
</dbReference>
<dbReference type="GO" id="GO:0022624">
    <property type="term" value="C:proteasome accessory complex"/>
    <property type="evidence" value="ECO:0000250"/>
    <property type="project" value="UniProtKB"/>
</dbReference>
<dbReference type="GO" id="GO:0008541">
    <property type="term" value="C:proteasome regulatory particle, lid subcomplex"/>
    <property type="evidence" value="ECO:0000318"/>
    <property type="project" value="GO_Central"/>
</dbReference>
<dbReference type="GO" id="GO:0043161">
    <property type="term" value="P:proteasome-mediated ubiquitin-dependent protein catabolic process"/>
    <property type="evidence" value="ECO:0000318"/>
    <property type="project" value="GO_Central"/>
</dbReference>
<dbReference type="FunFam" id="1.25.40.990:FF:000001">
    <property type="entry name" value="26S proteasome non-ATPase regulatory subunit"/>
    <property type="match status" value="1"/>
</dbReference>
<dbReference type="Gene3D" id="1.25.40.990">
    <property type="match status" value="1"/>
</dbReference>
<dbReference type="InterPro" id="IPR006746">
    <property type="entry name" value="26S_Psome_Rpn12"/>
</dbReference>
<dbReference type="InterPro" id="IPR033464">
    <property type="entry name" value="CSN8_PSD8_EIF3K"/>
</dbReference>
<dbReference type="InterPro" id="IPR000717">
    <property type="entry name" value="PCI_dom"/>
</dbReference>
<dbReference type="PANTHER" id="PTHR12387">
    <property type="entry name" value="26S PROTEASOME NON-ATPASE REGULATORY SUBUNIT 8"/>
    <property type="match status" value="1"/>
</dbReference>
<dbReference type="PANTHER" id="PTHR12387:SF0">
    <property type="entry name" value="26S PROTEASOME NON-ATPASE REGULATORY SUBUNIT 8"/>
    <property type="match status" value="1"/>
</dbReference>
<dbReference type="Pfam" id="PF10075">
    <property type="entry name" value="CSN8_PSD8_EIF3K"/>
    <property type="match status" value="1"/>
</dbReference>
<dbReference type="PROSITE" id="PS50250">
    <property type="entry name" value="PCI"/>
    <property type="match status" value="1"/>
</dbReference>
<keyword id="KW-1017">Isopeptide bond</keyword>
<keyword id="KW-0597">Phosphoprotein</keyword>
<keyword id="KW-0647">Proteasome</keyword>
<keyword id="KW-1185">Reference proteome</keyword>
<keyword id="KW-0832">Ubl conjugation</keyword>
<proteinExistence type="evidence at transcript level"/>
<organism>
    <name type="scientific">Bos taurus</name>
    <name type="common">Bovine</name>
    <dbReference type="NCBI Taxonomy" id="9913"/>
    <lineage>
        <taxon>Eukaryota</taxon>
        <taxon>Metazoa</taxon>
        <taxon>Chordata</taxon>
        <taxon>Craniata</taxon>
        <taxon>Vertebrata</taxon>
        <taxon>Euteleostomi</taxon>
        <taxon>Mammalia</taxon>
        <taxon>Eutheria</taxon>
        <taxon>Laurasiatheria</taxon>
        <taxon>Artiodactyla</taxon>
        <taxon>Ruminantia</taxon>
        <taxon>Pecora</taxon>
        <taxon>Bovidae</taxon>
        <taxon>Bovinae</taxon>
        <taxon>Bos</taxon>
    </lineage>
</organism>
<sequence>MAATAVNGVAGTSSSGSAAASGAILQAAAGMYEQLKGEWNRKSPNLSKCGEELGRLKLVLLELNFLPTTGTKLTKQQLILARDIQEIGAQWSILRKDIPSFERYMAQLKCYYFDYKEQLPESAYMHQLLGLNLLFLLSQNRVAEFHTELERLPAKDIQTNVYIKHPVSLEQYLMEGSYNKVFLAKGNIPAESYTFFIDILLDTIRDEIAGCIEKAYEKILFTEATRILFFNTPKKMTDYAKKRGWVLGINNYYSFASQQQKPEDTTIPSTELAKQVIEYARQLEMIV</sequence>
<accession>Q3SYT7</accession>
<protein>
    <recommendedName>
        <fullName>26S proteasome non-ATPase regulatory subunit 8</fullName>
    </recommendedName>
    <alternativeName>
        <fullName>26S proteasome regulatory subunit RPN12</fullName>
    </alternativeName>
</protein>
<name>PSMD8_BOVIN</name>
<reference key="1">
    <citation type="submission" date="2005-08" db="EMBL/GenBank/DDBJ databases">
        <authorList>
            <consortium name="NIH - Mammalian Gene Collection (MGC) project"/>
        </authorList>
    </citation>
    <scope>NUCLEOTIDE SEQUENCE [LARGE SCALE MRNA]</scope>
    <source>
        <strain>Crossbred X Angus</strain>
        <tissue>Liver</tissue>
    </source>
</reference>
<comment type="function">
    <text evidence="1">Component of the 26S proteasome, a multiprotein complex involved in the ATP-dependent degradation of ubiquitinated proteins. This complex plays a key role in the maintenance of protein homeostasis by removing misfolded or damaged proteins, which could impair cellular functions, and by removing proteins whose functions are no longer required. Therefore, the proteasome participates in numerous cellular processes, including cell cycle progression, apoptosis, or DNA damage repair.</text>
</comment>
<comment type="subunit">
    <text evidence="1 2">Component of the 19S proteasome regulatory particle complex. The 26S proteasome consists of a 20S core particle (CP) and two 19S regulatory subunits (RP). The regulatory particle is made of a lid composed of 9 subunits including PSMD8, a base containing 6 ATPases and few additional components. Interacts with DDI2 (By similarity). Interacts with TASOR (By similarity).</text>
</comment>
<comment type="similarity">
    <text evidence="4">Belongs to the proteasome subunit S14 family.</text>
</comment>
<gene>
    <name type="primary">PSMD8</name>
</gene>